<sequence>MVLTTDTKFSEIYDIIKGDSVQGESVLILVARDCDSIAACKILTEILKSDLIAYNIKAVSGYEDLENVNSTLLENEEIKSIIMINCGGNIDITNVFTNLNDQQVAYIIDSHRPYSINNITNESSVLIIDDGTYIEQDELQQLSDDSEEEEEELEEEEAEEDVVEDEAEEAEEAEEAEEAEEAEFDPENEDNPENDEDDGGSENIDENERKSKKKNKKDKKSKRKHRKKKKKKSEKLEKTYYGKSAAVSMYSLSTFLNKQNLDDLLWYAVLGLTDQFIHEKITLDSYEQQYKNFKELILNNYPTDGDDDQEERYRPGNDEDDYDENGDLKRHPSSMFLHGDKIIPSDDFRFMLYRHWNLYESLFNSRYVACKLRVWKAKGRFQLESLFAMMGIPLDQVKQKYNSMNVHYKKQLKQLLAINGPKFGLVNLYFNSFLKKYSNNSEISASDTVYAVTALMESDNLESDQSDQDIWEQNFWEAYDSISNKNIDLLKIGLKQSIQLQKEITRQVTSMIEKRSVILSGPFRYAFITESSDLKYFIHPLALTKLGLFMMDAFISMGKAKRPFLIGALNENKNSYLIVGISGSHSTDIQSNTFGEYFRKSAEYTDATFKYQSFDTSIVEVSKTDLHKFVEHLHGTMQTTQISK</sequence>
<comment type="function">
    <text evidence="1">Required for initiation of chromosomal DNA replication.</text>
</comment>
<comment type="subcellular location">
    <subcellularLocation>
        <location evidence="1">Nucleus</location>
    </subcellularLocation>
</comment>
<comment type="similarity">
    <text evidence="3">Belongs to the CDC45 family.</text>
</comment>
<keyword id="KW-0131">Cell cycle</keyword>
<keyword id="KW-0235">DNA replication</keyword>
<keyword id="KW-0539">Nucleus</keyword>
<keyword id="KW-1185">Reference proteome</keyword>
<evidence type="ECO:0000250" key="1"/>
<evidence type="ECO:0000256" key="2">
    <source>
        <dbReference type="SAM" id="MobiDB-lite"/>
    </source>
</evidence>
<evidence type="ECO:0000305" key="3"/>
<organism>
    <name type="scientific">Dictyostelium discoideum</name>
    <name type="common">Social amoeba</name>
    <dbReference type="NCBI Taxonomy" id="44689"/>
    <lineage>
        <taxon>Eukaryota</taxon>
        <taxon>Amoebozoa</taxon>
        <taxon>Evosea</taxon>
        <taxon>Eumycetozoa</taxon>
        <taxon>Dictyostelia</taxon>
        <taxon>Dictyosteliales</taxon>
        <taxon>Dictyosteliaceae</taxon>
        <taxon>Dictyostelium</taxon>
    </lineage>
</organism>
<proteinExistence type="inferred from homology"/>
<protein>
    <recommendedName>
        <fullName>Cell division control protein 45 homolog</fullName>
    </recommendedName>
</protein>
<name>CDC45_DICDI</name>
<accession>Q55GA4</accession>
<gene>
    <name type="primary">cdc45</name>
    <name type="ORF">DDB_G0267748</name>
</gene>
<feature type="chain" id="PRO_0000328571" description="Cell division control protein 45 homolog">
    <location>
        <begin position="1"/>
        <end position="644"/>
    </location>
</feature>
<feature type="region of interest" description="Disordered" evidence="2">
    <location>
        <begin position="141"/>
        <end position="235"/>
    </location>
</feature>
<feature type="region of interest" description="Disordered" evidence="2">
    <location>
        <begin position="301"/>
        <end position="328"/>
    </location>
</feature>
<feature type="compositionally biased region" description="Acidic residues" evidence="2">
    <location>
        <begin position="144"/>
        <end position="205"/>
    </location>
</feature>
<feature type="compositionally biased region" description="Basic residues" evidence="2">
    <location>
        <begin position="210"/>
        <end position="233"/>
    </location>
</feature>
<dbReference type="EMBL" id="AAFI02000003">
    <property type="protein sequence ID" value="EAL73327.1"/>
    <property type="molecule type" value="Genomic_DNA"/>
</dbReference>
<dbReference type="RefSeq" id="XP_647280.1">
    <property type="nucleotide sequence ID" value="XM_642188.1"/>
</dbReference>
<dbReference type="SMR" id="Q55GA4"/>
<dbReference type="FunCoup" id="Q55GA4">
    <property type="interactions" value="364"/>
</dbReference>
<dbReference type="STRING" id="44689.Q55GA4"/>
<dbReference type="PaxDb" id="44689-DDB0237549"/>
<dbReference type="EnsemblProtists" id="EAL73327">
    <property type="protein sequence ID" value="EAL73327"/>
    <property type="gene ID" value="DDB_G0267748"/>
</dbReference>
<dbReference type="GeneID" id="8616086"/>
<dbReference type="KEGG" id="ddi:DDB_G0267748"/>
<dbReference type="dictyBase" id="DDB_G0267748">
    <property type="gene designation" value="cdc45"/>
</dbReference>
<dbReference type="VEuPathDB" id="AmoebaDB:DDB_G0267748"/>
<dbReference type="eggNOG" id="KOG2475">
    <property type="taxonomic scope" value="Eukaryota"/>
</dbReference>
<dbReference type="HOGENOM" id="CLU_005871_4_0_1"/>
<dbReference type="InParanoid" id="Q55GA4"/>
<dbReference type="OMA" id="EDCFMEA"/>
<dbReference type="PhylomeDB" id="Q55GA4"/>
<dbReference type="Reactome" id="R-DDI-68962">
    <property type="pathway name" value="Activation of the pre-replicative complex"/>
</dbReference>
<dbReference type="PRO" id="PR:Q55GA4"/>
<dbReference type="Proteomes" id="UP000002195">
    <property type="component" value="Chromosome 1"/>
</dbReference>
<dbReference type="GO" id="GO:0031261">
    <property type="term" value="C:DNA replication preinitiation complex"/>
    <property type="evidence" value="ECO:0000318"/>
    <property type="project" value="GO_Central"/>
</dbReference>
<dbReference type="GO" id="GO:0003682">
    <property type="term" value="F:chromatin binding"/>
    <property type="evidence" value="ECO:0000318"/>
    <property type="project" value="GO_Central"/>
</dbReference>
<dbReference type="GO" id="GO:0003688">
    <property type="term" value="F:DNA replication origin binding"/>
    <property type="evidence" value="ECO:0000318"/>
    <property type="project" value="GO_Central"/>
</dbReference>
<dbReference type="GO" id="GO:0003697">
    <property type="term" value="F:single-stranded DNA binding"/>
    <property type="evidence" value="ECO:0000318"/>
    <property type="project" value="GO_Central"/>
</dbReference>
<dbReference type="GO" id="GO:0006270">
    <property type="term" value="P:DNA replication initiation"/>
    <property type="evidence" value="ECO:0000318"/>
    <property type="project" value="GO_Central"/>
</dbReference>
<dbReference type="GO" id="GO:0000727">
    <property type="term" value="P:double-strand break repair via break-induced replication"/>
    <property type="evidence" value="ECO:0000318"/>
    <property type="project" value="GO_Central"/>
</dbReference>
<dbReference type="GO" id="GO:1902977">
    <property type="term" value="P:mitotic DNA replication preinitiation complex assembly"/>
    <property type="evidence" value="ECO:0000318"/>
    <property type="project" value="GO_Central"/>
</dbReference>
<dbReference type="InterPro" id="IPR003874">
    <property type="entry name" value="CDC45"/>
</dbReference>
<dbReference type="PANTHER" id="PTHR10507">
    <property type="entry name" value="CDC45-RELATED PROTEIN"/>
    <property type="match status" value="1"/>
</dbReference>
<dbReference type="PANTHER" id="PTHR10507:SF0">
    <property type="entry name" value="CELL DIVISION CONTROL PROTEIN 45 HOMOLOG"/>
    <property type="match status" value="1"/>
</dbReference>
<dbReference type="Pfam" id="PF02724">
    <property type="entry name" value="CDC45"/>
    <property type="match status" value="1"/>
</dbReference>
<reference key="1">
    <citation type="journal article" date="2005" name="Nature">
        <title>The genome of the social amoeba Dictyostelium discoideum.</title>
        <authorList>
            <person name="Eichinger L."/>
            <person name="Pachebat J.A."/>
            <person name="Gloeckner G."/>
            <person name="Rajandream M.A."/>
            <person name="Sucgang R."/>
            <person name="Berriman M."/>
            <person name="Song J."/>
            <person name="Olsen R."/>
            <person name="Szafranski K."/>
            <person name="Xu Q."/>
            <person name="Tunggal B."/>
            <person name="Kummerfeld S."/>
            <person name="Madera M."/>
            <person name="Konfortov B.A."/>
            <person name="Rivero F."/>
            <person name="Bankier A.T."/>
            <person name="Lehmann R."/>
            <person name="Hamlin N."/>
            <person name="Davies R."/>
            <person name="Gaudet P."/>
            <person name="Fey P."/>
            <person name="Pilcher K."/>
            <person name="Chen G."/>
            <person name="Saunders D."/>
            <person name="Sodergren E.J."/>
            <person name="Davis P."/>
            <person name="Kerhornou A."/>
            <person name="Nie X."/>
            <person name="Hall N."/>
            <person name="Anjard C."/>
            <person name="Hemphill L."/>
            <person name="Bason N."/>
            <person name="Farbrother P."/>
            <person name="Desany B."/>
            <person name="Just E."/>
            <person name="Morio T."/>
            <person name="Rost R."/>
            <person name="Churcher C.M."/>
            <person name="Cooper J."/>
            <person name="Haydock S."/>
            <person name="van Driessche N."/>
            <person name="Cronin A."/>
            <person name="Goodhead I."/>
            <person name="Muzny D.M."/>
            <person name="Mourier T."/>
            <person name="Pain A."/>
            <person name="Lu M."/>
            <person name="Harper D."/>
            <person name="Lindsay R."/>
            <person name="Hauser H."/>
            <person name="James K.D."/>
            <person name="Quiles M."/>
            <person name="Madan Babu M."/>
            <person name="Saito T."/>
            <person name="Buchrieser C."/>
            <person name="Wardroper A."/>
            <person name="Felder M."/>
            <person name="Thangavelu M."/>
            <person name="Johnson D."/>
            <person name="Knights A."/>
            <person name="Loulseged H."/>
            <person name="Mungall K.L."/>
            <person name="Oliver K."/>
            <person name="Price C."/>
            <person name="Quail M.A."/>
            <person name="Urushihara H."/>
            <person name="Hernandez J."/>
            <person name="Rabbinowitsch E."/>
            <person name="Steffen D."/>
            <person name="Sanders M."/>
            <person name="Ma J."/>
            <person name="Kohara Y."/>
            <person name="Sharp S."/>
            <person name="Simmonds M.N."/>
            <person name="Spiegler S."/>
            <person name="Tivey A."/>
            <person name="Sugano S."/>
            <person name="White B."/>
            <person name="Walker D."/>
            <person name="Woodward J.R."/>
            <person name="Winckler T."/>
            <person name="Tanaka Y."/>
            <person name="Shaulsky G."/>
            <person name="Schleicher M."/>
            <person name="Weinstock G.M."/>
            <person name="Rosenthal A."/>
            <person name="Cox E.C."/>
            <person name="Chisholm R.L."/>
            <person name="Gibbs R.A."/>
            <person name="Loomis W.F."/>
            <person name="Platzer M."/>
            <person name="Kay R.R."/>
            <person name="Williams J.G."/>
            <person name="Dear P.H."/>
            <person name="Noegel A.A."/>
            <person name="Barrell B.G."/>
            <person name="Kuspa A."/>
        </authorList>
    </citation>
    <scope>NUCLEOTIDE SEQUENCE [LARGE SCALE GENOMIC DNA]</scope>
    <source>
        <strain>AX4</strain>
    </source>
</reference>